<sequence>MNKSNFFLLLAVCVSAFSVVMQQNQYRLNFTALDKAKKQEIALEQDYAQMRLQQARLANHEAIRAAAEKQNLHPPVSGNTFMVEHQR</sequence>
<protein>
    <recommendedName>
        <fullName evidence="2">Cell division protein FtsL</fullName>
    </recommendedName>
</protein>
<accession>Q5F6K8</accession>
<comment type="function">
    <text evidence="2">Essential cell division protein. May link together the upstream cell division proteins, which are predominantly cytoplasmic, with the downstream cell division proteins, which are predominantly periplasmic.</text>
</comment>
<comment type="subunit">
    <text evidence="2">Part of a complex composed of FtsB, FtsL and FtsQ.</text>
</comment>
<comment type="subcellular location">
    <subcellularLocation>
        <location evidence="2">Cell inner membrane</location>
        <topology evidence="2">Single-pass type II membrane protein</topology>
    </subcellularLocation>
    <text evidence="2">Localizes to the division septum where it forms a ring structure.</text>
</comment>
<comment type="similarity">
    <text evidence="2">Belongs to the FtsL family.</text>
</comment>
<keyword id="KW-0131">Cell cycle</keyword>
<keyword id="KW-0132">Cell division</keyword>
<keyword id="KW-0997">Cell inner membrane</keyword>
<keyword id="KW-1003">Cell membrane</keyword>
<keyword id="KW-0175">Coiled coil</keyword>
<keyword id="KW-0472">Membrane</keyword>
<keyword id="KW-1185">Reference proteome</keyword>
<keyword id="KW-0812">Transmembrane</keyword>
<keyword id="KW-1133">Transmembrane helix</keyword>
<organism>
    <name type="scientific">Neisseria gonorrhoeae (strain ATCC 700825 / FA 1090)</name>
    <dbReference type="NCBI Taxonomy" id="242231"/>
    <lineage>
        <taxon>Bacteria</taxon>
        <taxon>Pseudomonadati</taxon>
        <taxon>Pseudomonadota</taxon>
        <taxon>Betaproteobacteria</taxon>
        <taxon>Neisseriales</taxon>
        <taxon>Neisseriaceae</taxon>
        <taxon>Neisseria</taxon>
    </lineage>
</organism>
<feature type="chain" id="PRO_0000414563" description="Cell division protein FtsL">
    <location>
        <begin position="1"/>
        <end position="87"/>
    </location>
</feature>
<feature type="topological domain" description="Cytoplasmic" evidence="2">
    <location>
        <begin position="1"/>
        <end position="6"/>
    </location>
</feature>
<feature type="transmembrane region" description="Helical" evidence="2">
    <location>
        <begin position="7"/>
        <end position="23"/>
    </location>
</feature>
<feature type="topological domain" description="Periplasmic" evidence="2">
    <location>
        <begin position="24"/>
        <end position="87"/>
    </location>
</feature>
<feature type="region of interest" description="Disordered" evidence="3">
    <location>
        <begin position="68"/>
        <end position="87"/>
    </location>
</feature>
<feature type="coiled-coil region" evidence="1">
    <location>
        <begin position="31"/>
        <end position="71"/>
    </location>
</feature>
<evidence type="ECO:0000255" key="1"/>
<evidence type="ECO:0000255" key="2">
    <source>
        <dbReference type="HAMAP-Rule" id="MF_00910"/>
    </source>
</evidence>
<evidence type="ECO:0000256" key="3">
    <source>
        <dbReference type="SAM" id="MobiDB-lite"/>
    </source>
</evidence>
<gene>
    <name evidence="2" type="primary">ftsL</name>
    <name type="ordered locus">NGO_1543</name>
</gene>
<reference key="1">
    <citation type="submission" date="2003-03" db="EMBL/GenBank/DDBJ databases">
        <title>The complete genome sequence of Neisseria gonorrhoeae.</title>
        <authorList>
            <person name="Lewis L.A."/>
            <person name="Gillaspy A.F."/>
            <person name="McLaughlin R.E."/>
            <person name="Gipson M."/>
            <person name="Ducey T.F."/>
            <person name="Ownbey T."/>
            <person name="Hartman K."/>
            <person name="Nydick C."/>
            <person name="Carson M.B."/>
            <person name="Vaughn J."/>
            <person name="Thomson C."/>
            <person name="Song L."/>
            <person name="Lin S."/>
            <person name="Yuan X."/>
            <person name="Najar F."/>
            <person name="Zhan M."/>
            <person name="Ren Q."/>
            <person name="Zhu H."/>
            <person name="Qi S."/>
            <person name="Kenton S.M."/>
            <person name="Lai H."/>
            <person name="White J.D."/>
            <person name="Clifton S."/>
            <person name="Roe B.A."/>
            <person name="Dyer D.W."/>
        </authorList>
    </citation>
    <scope>NUCLEOTIDE SEQUENCE [LARGE SCALE GENOMIC DNA]</scope>
    <source>
        <strain>ATCC 700825 / FA 1090</strain>
    </source>
</reference>
<name>FTSL_NEIG1</name>
<dbReference type="EMBL" id="AE004969">
    <property type="protein sequence ID" value="AAW90179.1"/>
    <property type="molecule type" value="Genomic_DNA"/>
</dbReference>
<dbReference type="RefSeq" id="WP_003689461.1">
    <property type="nucleotide sequence ID" value="NC_002946.2"/>
</dbReference>
<dbReference type="RefSeq" id="YP_208591.1">
    <property type="nucleotide sequence ID" value="NC_002946.2"/>
</dbReference>
<dbReference type="SMR" id="Q5F6K8"/>
<dbReference type="STRING" id="242231.NGO_1543"/>
<dbReference type="KEGG" id="ngo:NGO_1543"/>
<dbReference type="PATRIC" id="fig|242231.10.peg.1840"/>
<dbReference type="HOGENOM" id="CLU_156524_0_2_4"/>
<dbReference type="Proteomes" id="UP000000535">
    <property type="component" value="Chromosome"/>
</dbReference>
<dbReference type="GO" id="GO:0032153">
    <property type="term" value="C:cell division site"/>
    <property type="evidence" value="ECO:0007669"/>
    <property type="project" value="UniProtKB-UniRule"/>
</dbReference>
<dbReference type="GO" id="GO:0005886">
    <property type="term" value="C:plasma membrane"/>
    <property type="evidence" value="ECO:0007669"/>
    <property type="project" value="UniProtKB-SubCell"/>
</dbReference>
<dbReference type="GO" id="GO:0043093">
    <property type="term" value="P:FtsZ-dependent cytokinesis"/>
    <property type="evidence" value="ECO:0007669"/>
    <property type="project" value="UniProtKB-UniRule"/>
</dbReference>
<dbReference type="HAMAP" id="MF_00910">
    <property type="entry name" value="FtsL"/>
    <property type="match status" value="1"/>
</dbReference>
<dbReference type="InterPro" id="IPR011922">
    <property type="entry name" value="Cell_div_FtsL"/>
</dbReference>
<dbReference type="NCBIfam" id="TIGR02209">
    <property type="entry name" value="ftsL_broad"/>
    <property type="match status" value="1"/>
</dbReference>
<dbReference type="Pfam" id="PF04999">
    <property type="entry name" value="FtsL"/>
    <property type="match status" value="1"/>
</dbReference>
<proteinExistence type="inferred from homology"/>